<protein>
    <recommendedName>
        <fullName>Fruit protein pKIWI501</fullName>
    </recommendedName>
</protein>
<sequence length="184" mass="18921">MATVEVTPAVTALPENETADEVTKPQEPQPEAAVAAPPAPAEPVTEEPEKAAPEAVEAPEEPAATDAKDPAEVAEAEEEVVEEPQEVPEEPVAEAAAKEVEATEGKAEPTGEMKDKTPEATDAPEAPAAAEEPTDAPEAPAVAEEPTNAPEAPAVGEEPEAKEGKPDEAVEEASTEVPVDKTEE</sequence>
<organism>
    <name type="scientific">Actinidia deliciosa</name>
    <name type="common">Kiwi</name>
    <dbReference type="NCBI Taxonomy" id="3627"/>
    <lineage>
        <taxon>Eukaryota</taxon>
        <taxon>Viridiplantae</taxon>
        <taxon>Streptophyta</taxon>
        <taxon>Embryophyta</taxon>
        <taxon>Tracheophyta</taxon>
        <taxon>Spermatophyta</taxon>
        <taxon>Magnoliopsida</taxon>
        <taxon>eudicotyledons</taxon>
        <taxon>Gunneridae</taxon>
        <taxon>Pentapetalae</taxon>
        <taxon>asterids</taxon>
        <taxon>Ericales</taxon>
        <taxon>Actinidiaceae</taxon>
        <taxon>Actinidia</taxon>
    </lineage>
</organism>
<name>K501_ACTDE</name>
<dbReference type="EMBL" id="L27810">
    <property type="protein sequence ID" value="AAA53071.1"/>
    <property type="molecule type" value="mRNA"/>
</dbReference>
<proteinExistence type="evidence at transcript level"/>
<gene>
    <name type="ORF">pKIWI501</name>
</gene>
<feature type="chain" id="PRO_0000084293" description="Fruit protein pKIWI501">
    <location>
        <begin position="1"/>
        <end position="184"/>
    </location>
</feature>
<feature type="region of interest" description="Disordered" evidence="1">
    <location>
        <begin position="1"/>
        <end position="184"/>
    </location>
</feature>
<feature type="compositionally biased region" description="Low complexity" evidence="1">
    <location>
        <begin position="25"/>
        <end position="36"/>
    </location>
</feature>
<feature type="compositionally biased region" description="Low complexity" evidence="1">
    <location>
        <begin position="53"/>
        <end position="65"/>
    </location>
</feature>
<feature type="compositionally biased region" description="Acidic residues" evidence="1">
    <location>
        <begin position="72"/>
        <end position="92"/>
    </location>
</feature>
<feature type="compositionally biased region" description="Basic and acidic residues" evidence="1">
    <location>
        <begin position="96"/>
        <end position="119"/>
    </location>
</feature>
<feature type="compositionally biased region" description="Low complexity" evidence="1">
    <location>
        <begin position="120"/>
        <end position="156"/>
    </location>
</feature>
<feature type="compositionally biased region" description="Basic and acidic residues" evidence="1">
    <location>
        <begin position="159"/>
        <end position="168"/>
    </location>
</feature>
<accession>P43393</accession>
<reference key="1">
    <citation type="journal article" date="1994" name="Plant Mol. Biol.">
        <title>Cloning and characterization of five cDNAs for genes differentially expressed during fruit development of kiwifruit (Actinidia deliciosa var. deliciosa).</title>
        <authorList>
            <person name="Ledger S.E."/>
            <person name="Gardner R.C."/>
        </authorList>
    </citation>
    <scope>NUCLEOTIDE SEQUENCE [MRNA]</scope>
    <source>
        <strain>cv. Hayward</strain>
        <tissue>Fruit</tissue>
    </source>
</reference>
<comment type="developmental stage">
    <text>Highly expressed in young fruit with reduced expression in the later stages of fruit development.</text>
</comment>
<comment type="similarity">
    <text evidence="2">To H.brasiliensis latex allergen Hev b 5.</text>
</comment>
<evidence type="ECO:0000256" key="1">
    <source>
        <dbReference type="SAM" id="MobiDB-lite"/>
    </source>
</evidence>
<evidence type="ECO:0000305" key="2"/>